<gene>
    <name evidence="1" type="primary">rpsK</name>
    <name type="ordered locus">CCA_00113</name>
</gene>
<keyword id="KW-0687">Ribonucleoprotein</keyword>
<keyword id="KW-0689">Ribosomal protein</keyword>
<keyword id="KW-0694">RNA-binding</keyword>
<keyword id="KW-0699">rRNA-binding</keyword>
<name>RS11_CHLCV</name>
<accession>Q824N2</accession>
<sequence>MVKHQTQKKGVKRKQLKNIPSGVVHVKATFNNTIVSITDPAGNTISWASAGKVGYSGSRKSSAFAATMAAQDAAKNAMNSGLKEVEVCLKGTGAGRESAVRALIASGLVVSVIRDETPVPHNGCRPRKRRRV</sequence>
<protein>
    <recommendedName>
        <fullName evidence="1">Small ribosomal subunit protein uS11</fullName>
    </recommendedName>
    <alternativeName>
        <fullName evidence="2">30S ribosomal protein S11</fullName>
    </alternativeName>
</protein>
<dbReference type="EMBL" id="AE015925">
    <property type="protein sequence ID" value="AAP04865.1"/>
    <property type="molecule type" value="Genomic_DNA"/>
</dbReference>
<dbReference type="RefSeq" id="WP_011006086.1">
    <property type="nucleotide sequence ID" value="NC_003361.3"/>
</dbReference>
<dbReference type="SMR" id="Q824N2"/>
<dbReference type="STRING" id="227941.CCA_00113"/>
<dbReference type="KEGG" id="cca:CCA_00113"/>
<dbReference type="eggNOG" id="COG0100">
    <property type="taxonomic scope" value="Bacteria"/>
</dbReference>
<dbReference type="HOGENOM" id="CLU_072439_5_0_0"/>
<dbReference type="OrthoDB" id="9806415at2"/>
<dbReference type="Proteomes" id="UP000002193">
    <property type="component" value="Chromosome"/>
</dbReference>
<dbReference type="GO" id="GO:1990904">
    <property type="term" value="C:ribonucleoprotein complex"/>
    <property type="evidence" value="ECO:0007669"/>
    <property type="project" value="UniProtKB-KW"/>
</dbReference>
<dbReference type="GO" id="GO:0005840">
    <property type="term" value="C:ribosome"/>
    <property type="evidence" value="ECO:0007669"/>
    <property type="project" value="UniProtKB-KW"/>
</dbReference>
<dbReference type="GO" id="GO:0019843">
    <property type="term" value="F:rRNA binding"/>
    <property type="evidence" value="ECO:0007669"/>
    <property type="project" value="UniProtKB-UniRule"/>
</dbReference>
<dbReference type="GO" id="GO:0003735">
    <property type="term" value="F:structural constituent of ribosome"/>
    <property type="evidence" value="ECO:0007669"/>
    <property type="project" value="InterPro"/>
</dbReference>
<dbReference type="GO" id="GO:0006412">
    <property type="term" value="P:translation"/>
    <property type="evidence" value="ECO:0007669"/>
    <property type="project" value="UniProtKB-UniRule"/>
</dbReference>
<dbReference type="FunFam" id="3.30.420.80:FF:000004">
    <property type="entry name" value="30S ribosomal protein S11"/>
    <property type="match status" value="1"/>
</dbReference>
<dbReference type="Gene3D" id="3.30.420.80">
    <property type="entry name" value="Ribosomal protein S11"/>
    <property type="match status" value="1"/>
</dbReference>
<dbReference type="HAMAP" id="MF_01310">
    <property type="entry name" value="Ribosomal_uS11"/>
    <property type="match status" value="1"/>
</dbReference>
<dbReference type="InterPro" id="IPR001971">
    <property type="entry name" value="Ribosomal_uS11"/>
</dbReference>
<dbReference type="InterPro" id="IPR019981">
    <property type="entry name" value="Ribosomal_uS11_bac-type"/>
</dbReference>
<dbReference type="InterPro" id="IPR018102">
    <property type="entry name" value="Ribosomal_uS11_CS"/>
</dbReference>
<dbReference type="InterPro" id="IPR036967">
    <property type="entry name" value="Ribosomal_uS11_sf"/>
</dbReference>
<dbReference type="NCBIfam" id="NF003698">
    <property type="entry name" value="PRK05309.1"/>
    <property type="match status" value="1"/>
</dbReference>
<dbReference type="NCBIfam" id="TIGR03632">
    <property type="entry name" value="uS11_bact"/>
    <property type="match status" value="1"/>
</dbReference>
<dbReference type="PANTHER" id="PTHR11759">
    <property type="entry name" value="40S RIBOSOMAL PROTEIN S14/30S RIBOSOMAL PROTEIN S11"/>
    <property type="match status" value="1"/>
</dbReference>
<dbReference type="Pfam" id="PF00411">
    <property type="entry name" value="Ribosomal_S11"/>
    <property type="match status" value="1"/>
</dbReference>
<dbReference type="PIRSF" id="PIRSF002131">
    <property type="entry name" value="Ribosomal_S11"/>
    <property type="match status" value="1"/>
</dbReference>
<dbReference type="SUPFAM" id="SSF53137">
    <property type="entry name" value="Translational machinery components"/>
    <property type="match status" value="1"/>
</dbReference>
<dbReference type="PROSITE" id="PS00054">
    <property type="entry name" value="RIBOSOMAL_S11"/>
    <property type="match status" value="1"/>
</dbReference>
<evidence type="ECO:0000255" key="1">
    <source>
        <dbReference type="HAMAP-Rule" id="MF_01310"/>
    </source>
</evidence>
<evidence type="ECO:0000305" key="2"/>
<reference key="1">
    <citation type="journal article" date="2003" name="Nucleic Acids Res.">
        <title>Genome sequence of Chlamydophila caviae (Chlamydia psittaci GPIC): examining the role of niche-specific genes in the evolution of the Chlamydiaceae.</title>
        <authorList>
            <person name="Read T.D."/>
            <person name="Myers G.S.A."/>
            <person name="Brunham R.C."/>
            <person name="Nelson W.C."/>
            <person name="Paulsen I.T."/>
            <person name="Heidelberg J.F."/>
            <person name="Holtzapple E.K."/>
            <person name="Khouri H.M."/>
            <person name="Federova N.B."/>
            <person name="Carty H.A."/>
            <person name="Umayam L.A."/>
            <person name="Haft D.H."/>
            <person name="Peterson J.D."/>
            <person name="Beanan M.J."/>
            <person name="White O."/>
            <person name="Salzberg S.L."/>
            <person name="Hsia R.-C."/>
            <person name="McClarty G."/>
            <person name="Rank R.G."/>
            <person name="Bavoil P.M."/>
            <person name="Fraser C.M."/>
        </authorList>
    </citation>
    <scope>NUCLEOTIDE SEQUENCE [LARGE SCALE GENOMIC DNA]</scope>
    <source>
        <strain>ATCC VR-813 / DSM 19441 / 03DC25 / GPIC</strain>
    </source>
</reference>
<comment type="function">
    <text evidence="1">Located on the platform of the 30S subunit, it bridges several disparate RNA helices of the 16S rRNA. Forms part of the Shine-Dalgarno cleft in the 70S ribosome.</text>
</comment>
<comment type="subunit">
    <text evidence="1">Part of the 30S ribosomal subunit. Interacts with proteins S7 and S18. Binds to IF-3.</text>
</comment>
<comment type="similarity">
    <text evidence="1">Belongs to the universal ribosomal protein uS11 family.</text>
</comment>
<proteinExistence type="inferred from homology"/>
<organism>
    <name type="scientific">Chlamydia caviae (strain ATCC VR-813 / DSM 19441 / 03DC25 / GPIC)</name>
    <name type="common">Chlamydophila caviae</name>
    <dbReference type="NCBI Taxonomy" id="227941"/>
    <lineage>
        <taxon>Bacteria</taxon>
        <taxon>Pseudomonadati</taxon>
        <taxon>Chlamydiota</taxon>
        <taxon>Chlamydiia</taxon>
        <taxon>Chlamydiales</taxon>
        <taxon>Chlamydiaceae</taxon>
        <taxon>Chlamydia/Chlamydophila group</taxon>
        <taxon>Chlamydia</taxon>
    </lineage>
</organism>
<feature type="chain" id="PRO_0000123128" description="Small ribosomal subunit protein uS11">
    <location>
        <begin position="1"/>
        <end position="132"/>
    </location>
</feature>